<accession>V9M398</accession>
<proteinExistence type="evidence at protein level"/>
<protein>
    <recommendedName>
        <fullName evidence="7">Disease resistance protein RUN1</fullName>
    </recommendedName>
    <alternativeName>
        <fullName>NAD(+) hydrolase RUN1</fullName>
        <ecNumber evidence="5">3.2.2.6</ecNumber>
    </alternativeName>
    <alternativeName>
        <fullName evidence="7">NADP(+) hydrolase RUN1</fullName>
        <ecNumber evidence="5">3.2.2.-</ecNumber>
    </alternativeName>
    <alternativeName>
        <fullName evidence="6">Resistance to Uncinula necator protein</fullName>
        <shortName evidence="6">MrRUN1</shortName>
    </alternativeName>
</protein>
<sequence length="1331" mass="152353">MASTSSSRASSSSSSSSTPSIPRTITYDVFLSFRGEDTRFNFTDHLYSALGRRGIRTFRDDKLRRGEAIAPELLKAIEESRSSVIVFSENYARSRWCLDELVKIMECHKDKKDPGHAVFPIFYHVDPSHVRKQEGSFGEAFAGYGENLKDKIPRWRTALTEAANLSGWPLQDGYESNQIKEITDSIFRRLKCKRLDAGANLVGIDSHVKEMIWRLHMESSDVRMVGMYGVGGIGKTTIAKVIYNELSREFEYMSFLENIREKFNTQGVSPLQNQLLDDILKGEGSQNINSVAHGASMIKDILSSKIVFIVLDDVDDQSQLEYLLRHREWLGEGSRVIITTRNKHVLDVQKVDDLYEVKGLNFEEACELFSLYAFEQNLPKSDYRNLSHRVVGYCQGLPLALKVLGCLLLKKTIPEWESELRKLDREPEAEILSVLKRSYDGLGRTEKSIFLDVACFFKGEDRDFVSKILDACDFHAEIGIKNLNDKCLITLQYNRIRMHDLIQQMGWEIVREKFPDEPNKWSRLWDTCDFERALTAYKGIKRVETISLDLSKLKRVCSNSNAFAKMTRLRLLKVQSSLDIDFEPEYIDADDKVELYDVVMKNASKMRLGRGFKFPSYELRYLRWDGYPLDFLPSNFDGGKLVELHLKCSNIKQLRLGNKDLEMLKVIDLSYSRKLSQMSEFSSMPNLERLFLRGCVSLIDIHPSVGNMKKLTTLSLKSCKKLKNLPDSIGDLESLEILDLAYCSKFEKFPEKGGNMKSLTELDLQNTAIKDLPDSIGDLESLKYLDLSDCSKFEKFPEKGGNMKSLRELDLRNTAIKDLPDSIRDLESLERLYLSYCSKFEKFPEKGGNMKSLMELDLQNTAIKDLPDSIGDLESLKYLDLSNCSKFEKFPEKGGNMKSLTELFLENTAIKDLPDSIGDLESLVSLNLSDCSKFEKFPEKGGNMKSLNWLYLNNTAIKDLPDSIGDLESLMRLYLSNSSKFEKLPEKVGNMKSLELLDLRNTAIKDLPDSIGDLEPLEKLSLSNCPKFEVLPLSLKAIDAHLCTSKEDLSRLLWLCHRNWLKSTTEEFDRWQLSAFIPESSGIPEWITYQNLGSEVTEKLPINWCEDPDFPGFVLSCLYRPSDYSSAYNFCHDFKCELNLHGNGFTFTDECSHSCWCDCHVNFKDSRDLVCVYWYPKTAIPEEDHHKYTHINASFTHRFEGHPFFCEDIKKIKCGINVIFLGDQRNHMPMLEHPQNSGDNGSALQDANGNVHGANQDDEHYHIPTLGLLGNFHDNGSAVLEDTLGNRKRRRDDSLPDVVEEPHYKKIGSHPTPISCFELHHQYQSEQNHMW</sequence>
<gene>
    <name evidence="6" type="primary">RUN1</name>
</gene>
<organism>
    <name type="scientific">Vitis rotundifolia</name>
    <name type="common">Muscadine grape</name>
    <dbReference type="NCBI Taxonomy" id="103349"/>
    <lineage>
        <taxon>Eukaryota</taxon>
        <taxon>Viridiplantae</taxon>
        <taxon>Streptophyta</taxon>
        <taxon>Embryophyta</taxon>
        <taxon>Tracheophyta</taxon>
        <taxon>Spermatophyta</taxon>
        <taxon>Magnoliopsida</taxon>
        <taxon>eudicotyledons</taxon>
        <taxon>Gunneridae</taxon>
        <taxon>Pentapetalae</taxon>
        <taxon>rosids</taxon>
        <taxon>Vitales</taxon>
        <taxon>Vitaceae</taxon>
        <taxon>Viteae</taxon>
        <taxon>Vitis</taxon>
    </lineage>
</organism>
<evidence type="ECO:0000255" key="1"/>
<evidence type="ECO:0000255" key="2">
    <source>
        <dbReference type="PROSITE-ProRule" id="PRU00204"/>
    </source>
</evidence>
<evidence type="ECO:0000256" key="3">
    <source>
        <dbReference type="SAM" id="MobiDB-lite"/>
    </source>
</evidence>
<evidence type="ECO:0000269" key="4">
    <source>
    </source>
</evidence>
<evidence type="ECO:0000269" key="5">
    <source>
    </source>
</evidence>
<evidence type="ECO:0000303" key="6">
    <source>
    </source>
</evidence>
<evidence type="ECO:0000305" key="7"/>
<evidence type="ECO:0007744" key="8">
    <source>
        <dbReference type="PDB" id="6O0W"/>
    </source>
</evidence>
<evidence type="ECO:0007829" key="9">
    <source>
        <dbReference type="PDB" id="6O0W"/>
    </source>
</evidence>
<evidence type="ECO:0007829" key="10">
    <source>
        <dbReference type="PDB" id="7RTS"/>
    </source>
</evidence>
<evidence type="ECO:0007829" key="11">
    <source>
        <dbReference type="PDB" id="7S2Z"/>
    </source>
</evidence>
<feature type="chain" id="PRO_0000448791" description="Disease resistance protein RUN1">
    <location>
        <begin position="1"/>
        <end position="1331"/>
    </location>
</feature>
<feature type="domain" description="TIR" evidence="2">
    <location>
        <begin position="25"/>
        <end position="190"/>
    </location>
</feature>
<feature type="domain" description="NB-ARC" evidence="1">
    <location>
        <begin position="206"/>
        <end position="434"/>
    </location>
</feature>
<feature type="repeat" description="LRR 1" evidence="1">
    <location>
        <begin position="429"/>
        <end position="452"/>
    </location>
</feature>
<feature type="repeat" description="LRR 2" evidence="1">
    <location>
        <begin position="480"/>
        <end position="509"/>
    </location>
</feature>
<feature type="repeat" description="LRR 3" evidence="1">
    <location>
        <begin position="540"/>
        <end position="565"/>
    </location>
</feature>
<feature type="repeat" description="LRR 4" evidence="1">
    <location>
        <begin position="616"/>
        <end position="638"/>
    </location>
</feature>
<feature type="repeat" description="LRR 5" evidence="1">
    <location>
        <begin position="648"/>
        <end position="673"/>
    </location>
</feature>
<feature type="repeat" description="LRR 6" evidence="1">
    <location>
        <begin position="684"/>
        <end position="708"/>
    </location>
</feature>
<feature type="repeat" description="LRR 7" evidence="1">
    <location>
        <begin position="709"/>
        <end position="732"/>
    </location>
</feature>
<feature type="repeat" description="LRR 8" evidence="1">
    <location>
        <begin position="734"/>
        <end position="756"/>
    </location>
</feature>
<feature type="repeat" description="LRR 9" evidence="1">
    <location>
        <begin position="757"/>
        <end position="779"/>
    </location>
</feature>
<feature type="repeat" description="LRR 10" evidence="1">
    <location>
        <begin position="781"/>
        <end position="803"/>
    </location>
</feature>
<feature type="repeat" description="LRR 11" evidence="1">
    <location>
        <begin position="804"/>
        <end position="826"/>
    </location>
</feature>
<feature type="repeat" description="LRR 12" evidence="1">
    <location>
        <begin position="828"/>
        <end position="850"/>
    </location>
</feature>
<feature type="repeat" description="LRR 13" evidence="1">
    <location>
        <begin position="851"/>
        <end position="873"/>
    </location>
</feature>
<feature type="repeat" description="LRR 14" evidence="1">
    <location>
        <begin position="875"/>
        <end position="897"/>
    </location>
</feature>
<feature type="repeat" description="LRR 15" evidence="1">
    <location>
        <begin position="898"/>
        <end position="920"/>
    </location>
</feature>
<feature type="repeat" description="LRR 16" evidence="1">
    <location>
        <begin position="922"/>
        <end position="944"/>
    </location>
</feature>
<feature type="repeat" description="LRR 17" evidence="1">
    <location>
        <begin position="945"/>
        <end position="967"/>
    </location>
</feature>
<feature type="repeat" description="LRR 18" evidence="1">
    <location>
        <begin position="969"/>
        <end position="991"/>
    </location>
</feature>
<feature type="repeat" description="LRR 19" evidence="1">
    <location>
        <begin position="992"/>
        <end position="1014"/>
    </location>
</feature>
<feature type="repeat" description="LRR 20" evidence="1">
    <location>
        <begin position="1017"/>
        <end position="1040"/>
    </location>
</feature>
<feature type="region of interest" description="Disordered" evidence="3">
    <location>
        <begin position="1"/>
        <end position="20"/>
    </location>
</feature>
<feature type="short sequence motif" description="Nuclear localization signal" evidence="4">
    <location>
        <begin position="1287"/>
        <end position="1291"/>
    </location>
</feature>
<feature type="active site" evidence="2 5">
    <location>
        <position position="100"/>
    </location>
</feature>
<feature type="binding site" evidence="5 8">
    <location>
        <begin position="34"/>
        <end position="39"/>
    </location>
    <ligand>
        <name>NAD(+)</name>
        <dbReference type="ChEBI" id="CHEBI:57540"/>
    </ligand>
</feature>
<feature type="binding site" evidence="5 8">
    <location>
        <position position="66"/>
    </location>
    <ligand>
        <name>NAD(+)</name>
        <dbReference type="ChEBI" id="CHEBI:57540"/>
    </ligand>
</feature>
<feature type="mutagenesis site" description="Reduced NAD(+) hydrolase activity." evidence="5">
    <original>R</original>
    <variation>A</variation>
    <location>
        <position position="34"/>
    </location>
</feature>
<feature type="mutagenesis site" description="Increased NAD(+) hydrolase activity." evidence="5">
    <original>RR</original>
    <variation>AA</variation>
    <location>
        <begin position="64"/>
        <end position="65"/>
    </location>
</feature>
<feature type="mutagenesis site" description="Reduced NAD(+) hydrolase activity." evidence="5">
    <original>S</original>
    <variation>A</variation>
    <location>
        <position position="94"/>
    </location>
</feature>
<feature type="mutagenesis site" description="Reduced NAD(+) hydrolase activity." evidence="5">
    <original>W</original>
    <variation>A</variation>
    <location>
        <position position="96"/>
    </location>
</feature>
<feature type="mutagenesis site" description="Abolished NAD(+) hydrolase activity." evidence="5">
    <original>E</original>
    <variation>A</variation>
    <location>
        <position position="100"/>
    </location>
</feature>
<feature type="mutagenesis site" description="Abolished nuclear localization." evidence="4">
    <original>KR</original>
    <variation>TS</variation>
    <location>
        <begin position="1288"/>
        <end position="1289"/>
    </location>
</feature>
<feature type="strand" evidence="10">
    <location>
        <begin position="27"/>
        <end position="33"/>
    </location>
</feature>
<feature type="helix" evidence="10">
    <location>
        <begin position="35"/>
        <end position="38"/>
    </location>
</feature>
<feature type="turn" evidence="10">
    <location>
        <begin position="39"/>
        <end position="41"/>
    </location>
</feature>
<feature type="helix" evidence="10">
    <location>
        <begin position="42"/>
        <end position="52"/>
    </location>
</feature>
<feature type="strand" evidence="10">
    <location>
        <begin position="57"/>
        <end position="59"/>
    </location>
</feature>
<feature type="strand" evidence="9">
    <location>
        <begin position="66"/>
        <end position="68"/>
    </location>
</feature>
<feature type="helix" evidence="10">
    <location>
        <begin position="71"/>
        <end position="78"/>
    </location>
</feature>
<feature type="strand" evidence="10">
    <location>
        <begin position="80"/>
        <end position="87"/>
    </location>
</feature>
<feature type="helix" evidence="10">
    <location>
        <begin position="91"/>
        <end position="93"/>
    </location>
</feature>
<feature type="helix" evidence="10">
    <location>
        <begin position="95"/>
        <end position="110"/>
    </location>
</feature>
<feature type="turn" evidence="11">
    <location>
        <begin position="112"/>
        <end position="115"/>
    </location>
</feature>
<feature type="strand" evidence="10">
    <location>
        <begin position="117"/>
        <end position="125"/>
    </location>
</feature>
<feature type="helix" evidence="10">
    <location>
        <begin position="127"/>
        <end position="133"/>
    </location>
</feature>
<feature type="helix" evidence="10">
    <location>
        <begin position="137"/>
        <end position="140"/>
    </location>
</feature>
<feature type="helix" evidence="9">
    <location>
        <begin position="146"/>
        <end position="148"/>
    </location>
</feature>
<feature type="turn" evidence="9">
    <location>
        <begin position="149"/>
        <end position="151"/>
    </location>
</feature>
<feature type="helix" evidence="10">
    <location>
        <begin position="152"/>
        <end position="163"/>
    </location>
</feature>
<feature type="strand" evidence="10">
    <location>
        <begin position="168"/>
        <end position="170"/>
    </location>
</feature>
<feature type="helix" evidence="10">
    <location>
        <begin position="175"/>
        <end position="190"/>
    </location>
</feature>
<keyword id="KW-0002">3D-structure</keyword>
<keyword id="KW-0963">Cytoplasm</keyword>
<keyword id="KW-0378">Hydrolase</keyword>
<keyword id="KW-0433">Leucine-rich repeat</keyword>
<keyword id="KW-0520">NAD</keyword>
<keyword id="KW-0539">Nucleus</keyword>
<keyword id="KW-0611">Plant defense</keyword>
<keyword id="KW-0677">Repeat</keyword>
<comment type="function">
    <text evidence="4 5">Disease resistance (R) protein that confers resistance to multiple powdery and downy mildew by promoting cell death (PubMed:24033846, PubMed:31439792). Acts as a NAD(+) hydrolase (NADase): in response to activation, catalyzes cleavage of NAD(+) into ADP-D-ribose (ADPR) and nicotinamide; NAD(+) cleavage triggering a defense system that promotes cell death (PubMed:31439792). Also able to hydrolyze NADP(+), but not other NAD(+)-related molecules (PubMed:31439792).</text>
</comment>
<comment type="catalytic activity">
    <reaction evidence="5">
        <text>NAD(+) + H2O = ADP-D-ribose + nicotinamide + H(+)</text>
        <dbReference type="Rhea" id="RHEA:16301"/>
        <dbReference type="ChEBI" id="CHEBI:15377"/>
        <dbReference type="ChEBI" id="CHEBI:15378"/>
        <dbReference type="ChEBI" id="CHEBI:17154"/>
        <dbReference type="ChEBI" id="CHEBI:57540"/>
        <dbReference type="ChEBI" id="CHEBI:57967"/>
        <dbReference type="EC" id="3.2.2.6"/>
    </reaction>
    <physiologicalReaction direction="left-to-right" evidence="5">
        <dbReference type="Rhea" id="RHEA:16302"/>
    </physiologicalReaction>
</comment>
<comment type="catalytic activity">
    <reaction evidence="5">
        <text>NADP(+) + H2O = ADP-D-ribose 2'-phosphate + nicotinamide + H(+)</text>
        <dbReference type="Rhea" id="RHEA:19849"/>
        <dbReference type="ChEBI" id="CHEBI:15377"/>
        <dbReference type="ChEBI" id="CHEBI:15378"/>
        <dbReference type="ChEBI" id="CHEBI:17154"/>
        <dbReference type="ChEBI" id="CHEBI:58349"/>
        <dbReference type="ChEBI" id="CHEBI:58673"/>
    </reaction>
    <physiologicalReaction direction="left-to-right" evidence="5">
        <dbReference type="Rhea" id="RHEA:19850"/>
    </physiologicalReaction>
</comment>
<comment type="subcellular location">
    <subcellularLocation>
        <location evidence="4">Nucleus</location>
    </subcellularLocation>
    <subcellularLocation>
        <location evidence="4">Cytoplasm</location>
    </subcellularLocation>
    <text evidence="4">Localizes predominantly to the nucleus.</text>
</comment>
<comment type="domain">
    <text evidence="2">The TIR domain mediates NAD(+) hydrolase (NADase) activity. Self-association of TIR domains is required for NADase activity.</text>
</comment>
<comment type="similarity">
    <text evidence="7">Belongs to the disease resistance TIR-NB-LRR family.</text>
</comment>
<dbReference type="EC" id="3.2.2.6" evidence="5"/>
<dbReference type="EC" id="3.2.2.-" evidence="5"/>
<dbReference type="EMBL" id="JQ904636">
    <property type="protein sequence ID" value="AGC24030.1"/>
    <property type="molecule type" value="Genomic_DNA"/>
</dbReference>
<dbReference type="PDB" id="6O0W">
    <property type="method" value="X-ray"/>
    <property type="resolution" value="1.75 A"/>
    <property type="chains" value="A=23-198"/>
</dbReference>
<dbReference type="PDB" id="7RTS">
    <property type="method" value="X-ray"/>
    <property type="resolution" value="1.74 A"/>
    <property type="chains" value="A=23-198"/>
</dbReference>
<dbReference type="PDB" id="7RX1">
    <property type="method" value="X-ray"/>
    <property type="resolution" value="1.89 A"/>
    <property type="chains" value="A/B=23-198"/>
</dbReference>
<dbReference type="PDB" id="7S2Z">
    <property type="method" value="X-ray"/>
    <property type="resolution" value="2.35 A"/>
    <property type="chains" value="A/B/C/D=23-198"/>
</dbReference>
<dbReference type="PDBsum" id="6O0W"/>
<dbReference type="PDBsum" id="7RTS"/>
<dbReference type="PDBsum" id="7RX1"/>
<dbReference type="PDBsum" id="7S2Z"/>
<dbReference type="SMR" id="V9M398"/>
<dbReference type="GO" id="GO:0005737">
    <property type="term" value="C:cytoplasm"/>
    <property type="evidence" value="ECO:0000314"/>
    <property type="project" value="UniProtKB"/>
</dbReference>
<dbReference type="GO" id="GO:0005634">
    <property type="term" value="C:nucleus"/>
    <property type="evidence" value="ECO:0000314"/>
    <property type="project" value="UniProtKB"/>
</dbReference>
<dbReference type="GO" id="GO:0043531">
    <property type="term" value="F:ADP binding"/>
    <property type="evidence" value="ECO:0007669"/>
    <property type="project" value="InterPro"/>
</dbReference>
<dbReference type="GO" id="GO:0003953">
    <property type="term" value="F:NAD+ nucleosidase activity"/>
    <property type="evidence" value="ECO:0000314"/>
    <property type="project" value="UniProtKB"/>
</dbReference>
<dbReference type="GO" id="GO:0061809">
    <property type="term" value="F:NAD+ nucleosidase activity, cyclic ADP-ribose generating"/>
    <property type="evidence" value="ECO:0007669"/>
    <property type="project" value="UniProtKB-EC"/>
</dbReference>
<dbReference type="GO" id="GO:0050135">
    <property type="term" value="F:NADP+ nucleosidase activity"/>
    <property type="evidence" value="ECO:0000314"/>
    <property type="project" value="UniProtKB"/>
</dbReference>
<dbReference type="GO" id="GO:0050832">
    <property type="term" value="P:defense response to fungus"/>
    <property type="evidence" value="ECO:0000315"/>
    <property type="project" value="UniProtKB"/>
</dbReference>
<dbReference type="GO" id="GO:0019677">
    <property type="term" value="P:NAD catabolic process"/>
    <property type="evidence" value="ECO:0000314"/>
    <property type="project" value="UniProtKB"/>
</dbReference>
<dbReference type="GO" id="GO:0043068">
    <property type="term" value="P:positive regulation of programmed cell death"/>
    <property type="evidence" value="ECO:0000314"/>
    <property type="project" value="UniProtKB"/>
</dbReference>
<dbReference type="GO" id="GO:0007165">
    <property type="term" value="P:signal transduction"/>
    <property type="evidence" value="ECO:0007669"/>
    <property type="project" value="InterPro"/>
</dbReference>
<dbReference type="FunFam" id="3.40.50.10140:FF:000007">
    <property type="entry name" value="Disease resistance protein (TIR-NBS-LRR class)"/>
    <property type="match status" value="1"/>
</dbReference>
<dbReference type="Gene3D" id="1.10.8.430">
    <property type="entry name" value="Helical domain of apoptotic protease-activating factors"/>
    <property type="match status" value="1"/>
</dbReference>
<dbReference type="Gene3D" id="3.40.50.300">
    <property type="entry name" value="P-loop containing nucleotide triphosphate hydrolases"/>
    <property type="match status" value="1"/>
</dbReference>
<dbReference type="Gene3D" id="3.80.10.10">
    <property type="entry name" value="Ribonuclease Inhibitor"/>
    <property type="match status" value="3"/>
</dbReference>
<dbReference type="Gene3D" id="3.40.50.10140">
    <property type="entry name" value="Toll/interleukin-1 receptor homology (TIR) domain"/>
    <property type="match status" value="1"/>
</dbReference>
<dbReference type="InterPro" id="IPR042197">
    <property type="entry name" value="Apaf_helical"/>
</dbReference>
<dbReference type="InterPro" id="IPR045344">
    <property type="entry name" value="C-JID"/>
</dbReference>
<dbReference type="InterPro" id="IPR044974">
    <property type="entry name" value="Disease_R_plants"/>
</dbReference>
<dbReference type="InterPro" id="IPR003591">
    <property type="entry name" value="Leu-rich_rpt_typical-subtyp"/>
</dbReference>
<dbReference type="InterPro" id="IPR032675">
    <property type="entry name" value="LRR_dom_sf"/>
</dbReference>
<dbReference type="InterPro" id="IPR055414">
    <property type="entry name" value="LRR_R13L4/SHOC2-like"/>
</dbReference>
<dbReference type="InterPro" id="IPR002182">
    <property type="entry name" value="NB-ARC"/>
</dbReference>
<dbReference type="InterPro" id="IPR027417">
    <property type="entry name" value="P-loop_NTPase"/>
</dbReference>
<dbReference type="InterPro" id="IPR000157">
    <property type="entry name" value="TIR_dom"/>
</dbReference>
<dbReference type="InterPro" id="IPR035897">
    <property type="entry name" value="Toll_tir_struct_dom_sf"/>
</dbReference>
<dbReference type="InterPro" id="IPR036390">
    <property type="entry name" value="WH_DNA-bd_sf"/>
</dbReference>
<dbReference type="PANTHER" id="PTHR11017:SF570">
    <property type="entry name" value="DISEASE RESISTANCE PROTEIN (TIR-NBS CLASS)-RELATED"/>
    <property type="match status" value="1"/>
</dbReference>
<dbReference type="PANTHER" id="PTHR11017">
    <property type="entry name" value="LEUCINE-RICH REPEAT-CONTAINING PROTEIN"/>
    <property type="match status" value="1"/>
</dbReference>
<dbReference type="Pfam" id="PF20160">
    <property type="entry name" value="C-JID"/>
    <property type="match status" value="1"/>
</dbReference>
<dbReference type="Pfam" id="PF23598">
    <property type="entry name" value="LRR_14"/>
    <property type="match status" value="2"/>
</dbReference>
<dbReference type="Pfam" id="PF00931">
    <property type="entry name" value="NB-ARC"/>
    <property type="match status" value="1"/>
</dbReference>
<dbReference type="Pfam" id="PF01582">
    <property type="entry name" value="TIR"/>
    <property type="match status" value="1"/>
</dbReference>
<dbReference type="Pfam" id="PF23282">
    <property type="entry name" value="WHD_ROQ1"/>
    <property type="match status" value="1"/>
</dbReference>
<dbReference type="PRINTS" id="PR00364">
    <property type="entry name" value="DISEASERSIST"/>
</dbReference>
<dbReference type="SMART" id="SM00369">
    <property type="entry name" value="LRR_TYP"/>
    <property type="match status" value="6"/>
</dbReference>
<dbReference type="SMART" id="SM00255">
    <property type="entry name" value="TIR"/>
    <property type="match status" value="1"/>
</dbReference>
<dbReference type="SUPFAM" id="SSF52058">
    <property type="entry name" value="L domain-like"/>
    <property type="match status" value="1"/>
</dbReference>
<dbReference type="SUPFAM" id="SSF52540">
    <property type="entry name" value="P-loop containing nucleoside triphosphate hydrolases"/>
    <property type="match status" value="1"/>
</dbReference>
<dbReference type="SUPFAM" id="SSF52047">
    <property type="entry name" value="RNI-like"/>
    <property type="match status" value="1"/>
</dbReference>
<dbReference type="SUPFAM" id="SSF52200">
    <property type="entry name" value="Toll/Interleukin receptor TIR domain"/>
    <property type="match status" value="1"/>
</dbReference>
<dbReference type="SUPFAM" id="SSF46785">
    <property type="entry name" value="Winged helix' DNA-binding domain"/>
    <property type="match status" value="1"/>
</dbReference>
<dbReference type="PROSITE" id="PS50104">
    <property type="entry name" value="TIR"/>
    <property type="match status" value="1"/>
</dbReference>
<reference key="1">
    <citation type="journal article" date="2013" name="Plant J.">
        <title>Genetic dissection of a TIR-NB-LRR locus from the wild North American grapevine species Muscadinia rotundifolia identifies paralogous genes conferring resistance to major fungal and oomycete pathogens in cultivated grapevine.</title>
        <authorList>
            <person name="Feechan A."/>
            <person name="Anderson C."/>
            <person name="Torregrosa L."/>
            <person name="Jermakow A."/>
            <person name="Mestre P."/>
            <person name="Wiedemann-Merdinoglu S."/>
            <person name="Merdinoglu D."/>
            <person name="Walker A.R."/>
            <person name="Cadle-Davidson L."/>
            <person name="Reisch B."/>
            <person name="Aubourg S."/>
            <person name="Bentahar N."/>
            <person name="Shrestha B."/>
            <person name="Bouquet A."/>
            <person name="Adam-Blondon A.F."/>
            <person name="Thomas M.R."/>
            <person name="Dry I.B."/>
        </authorList>
    </citation>
    <scope>NUCLEOTIDE SEQUENCE [GENOMIC DNA]</scope>
    <scope>FUNCTION</scope>
    <scope>SUBCELLULAR LOCATION</scope>
    <scope>MUTAGENESIS OF 1288-LYS-ARG-1289</scope>
</reference>
<reference evidence="8" key="2">
    <citation type="journal article" date="2019" name="Science">
        <title>NAD+ cleavage activity by animal and plant TIR domains in cell death pathways.</title>
        <authorList>
            <person name="Horsefield S."/>
            <person name="Burdett H."/>
            <person name="Zhang X."/>
            <person name="Manik M.K."/>
            <person name="Shi Y."/>
            <person name="Chen J."/>
            <person name="Qi T."/>
            <person name="Gilley J."/>
            <person name="Lai J.S."/>
            <person name="Rank M.X."/>
            <person name="Casey L.W."/>
            <person name="Gu W."/>
            <person name="Ericsson D.J."/>
            <person name="Foley G."/>
            <person name="Hughes R.O."/>
            <person name="Bosanac T."/>
            <person name="von Itzstein M."/>
            <person name="Rathjen J.P."/>
            <person name="Nanson J.D."/>
            <person name="Boden M."/>
            <person name="Dry I.B."/>
            <person name="Williams S.J."/>
            <person name="Staskawicz B.J."/>
            <person name="Coleman M.P."/>
            <person name="Ve T."/>
            <person name="Dodds P.N."/>
            <person name="Kobe B."/>
        </authorList>
    </citation>
    <scope>X-RAY CRYSTALLOGRAPHY (1.75 ANGSTROMS) OF 23-198 IN COMPLEX WITH NADP</scope>
    <scope>ACTIVE SITE</scope>
    <scope>MUTAGENESIS OF ARG-34; 64-ARG-ARG-65; SER-94; TRP-96 AND GLU-100</scope>
</reference>
<name>RUN1_VITRO</name>